<reference key="1">
    <citation type="journal article" date="2008" name="BMC Genomics">
        <title>The genome of Aeromonas salmonicida subsp. salmonicida A449: insights into the evolution of a fish pathogen.</title>
        <authorList>
            <person name="Reith M.E."/>
            <person name="Singh R.K."/>
            <person name="Curtis B."/>
            <person name="Boyd J.M."/>
            <person name="Bouevitch A."/>
            <person name="Kimball J."/>
            <person name="Munholland J."/>
            <person name="Murphy C."/>
            <person name="Sarty D."/>
            <person name="Williams J."/>
            <person name="Nash J.H."/>
            <person name="Johnson S.C."/>
            <person name="Brown L.L."/>
        </authorList>
    </citation>
    <scope>NUCLEOTIDE SEQUENCE [LARGE SCALE GENOMIC DNA]</scope>
    <source>
        <strain>A449</strain>
    </source>
</reference>
<protein>
    <recommendedName>
        <fullName evidence="1">GTPase Der</fullName>
    </recommendedName>
    <alternativeName>
        <fullName evidence="1">GTP-binding protein EngA</fullName>
    </alternativeName>
</protein>
<accession>A4SNZ8</accession>
<name>DER_AERS4</name>
<proteinExistence type="inferred from homology"/>
<sequence length="499" mass="55594">MTPVVALVGRPNVGKSTLFNRLTRTRDALVADFPGLTRDRKYGQAKLGELEFIVVDTGGIDGTEEGIELKMAEQSLLAIEEADVVLFMVDARAGLTAADQAIAAHLRKTHKKVFLVANKTDGIDGDSAVSEFYCLALGDVYQIAAAHGRGVLSLLELALAPHLETLVDAAAEEDAQDEEEEDFDEEALLRMVAAGDLDTREDTKETPFADLPIKFAIVGRPNVGKSTLTNRMLGEDRVIVYDMPGTTRDSVYVPMERDEQKYVVIDTAGVRRRGKVHETVEKFSVIKTLKAIEDANVCLLVIDAQETITDQDLSILGFVLHSGRSVVLVVNKWDGLDQKVKEDVKNELDRRLGFIDFARVHFISALHGSGVGHLFESIQEAYQSATRRTSTAMLTRIMQMAQEDHQPPMVNGRRVKLKYAHAGGYNPPRIVIHGNQLNDLPDSYKRYLINYFRKSLKIMGSPIRVEFQESANPFEGRKNTMTLSQERQRKRLLKAKTKK</sequence>
<feature type="chain" id="PRO_1000011553" description="GTPase Der">
    <location>
        <begin position="1"/>
        <end position="499"/>
    </location>
</feature>
<feature type="domain" description="EngA-type G 1">
    <location>
        <begin position="3"/>
        <end position="166"/>
    </location>
</feature>
<feature type="domain" description="EngA-type G 2">
    <location>
        <begin position="213"/>
        <end position="386"/>
    </location>
</feature>
<feature type="domain" description="KH-like" evidence="1">
    <location>
        <begin position="387"/>
        <end position="471"/>
    </location>
</feature>
<feature type="region of interest" description="Disordered" evidence="2">
    <location>
        <begin position="476"/>
        <end position="499"/>
    </location>
</feature>
<feature type="compositionally biased region" description="Basic residues" evidence="2">
    <location>
        <begin position="488"/>
        <end position="499"/>
    </location>
</feature>
<feature type="binding site" evidence="1">
    <location>
        <begin position="9"/>
        <end position="16"/>
    </location>
    <ligand>
        <name>GTP</name>
        <dbReference type="ChEBI" id="CHEBI:37565"/>
        <label>1</label>
    </ligand>
</feature>
<feature type="binding site" evidence="1">
    <location>
        <begin position="56"/>
        <end position="60"/>
    </location>
    <ligand>
        <name>GTP</name>
        <dbReference type="ChEBI" id="CHEBI:37565"/>
        <label>1</label>
    </ligand>
</feature>
<feature type="binding site" evidence="1">
    <location>
        <begin position="118"/>
        <end position="121"/>
    </location>
    <ligand>
        <name>GTP</name>
        <dbReference type="ChEBI" id="CHEBI:37565"/>
        <label>1</label>
    </ligand>
</feature>
<feature type="binding site" evidence="1">
    <location>
        <begin position="219"/>
        <end position="226"/>
    </location>
    <ligand>
        <name>GTP</name>
        <dbReference type="ChEBI" id="CHEBI:37565"/>
        <label>2</label>
    </ligand>
</feature>
<feature type="binding site" evidence="1">
    <location>
        <begin position="266"/>
        <end position="270"/>
    </location>
    <ligand>
        <name>GTP</name>
        <dbReference type="ChEBI" id="CHEBI:37565"/>
        <label>2</label>
    </ligand>
</feature>
<feature type="binding site" evidence="1">
    <location>
        <begin position="331"/>
        <end position="334"/>
    </location>
    <ligand>
        <name>GTP</name>
        <dbReference type="ChEBI" id="CHEBI:37565"/>
        <label>2</label>
    </ligand>
</feature>
<comment type="function">
    <text evidence="1">GTPase that plays an essential role in the late steps of ribosome biogenesis.</text>
</comment>
<comment type="subunit">
    <text evidence="1">Associates with the 50S ribosomal subunit.</text>
</comment>
<comment type="similarity">
    <text evidence="1">Belongs to the TRAFAC class TrmE-Era-EngA-EngB-Septin-like GTPase superfamily. EngA (Der) GTPase family.</text>
</comment>
<organism>
    <name type="scientific">Aeromonas salmonicida (strain A449)</name>
    <dbReference type="NCBI Taxonomy" id="382245"/>
    <lineage>
        <taxon>Bacteria</taxon>
        <taxon>Pseudomonadati</taxon>
        <taxon>Pseudomonadota</taxon>
        <taxon>Gammaproteobacteria</taxon>
        <taxon>Aeromonadales</taxon>
        <taxon>Aeromonadaceae</taxon>
        <taxon>Aeromonas</taxon>
    </lineage>
</organism>
<dbReference type="EMBL" id="CP000644">
    <property type="protein sequence ID" value="ABO90620.1"/>
    <property type="molecule type" value="Genomic_DNA"/>
</dbReference>
<dbReference type="RefSeq" id="WP_005310436.1">
    <property type="nucleotide sequence ID" value="NC_009348.1"/>
</dbReference>
<dbReference type="SMR" id="A4SNZ8"/>
<dbReference type="STRING" id="29491.GCA_000820065_00286"/>
<dbReference type="KEGG" id="asa:ASA_2595"/>
<dbReference type="PATRIC" id="fig|382245.13.peg.2563"/>
<dbReference type="eggNOG" id="COG1160">
    <property type="taxonomic scope" value="Bacteria"/>
</dbReference>
<dbReference type="HOGENOM" id="CLU_016077_5_0_6"/>
<dbReference type="Proteomes" id="UP000000225">
    <property type="component" value="Chromosome"/>
</dbReference>
<dbReference type="GO" id="GO:0005525">
    <property type="term" value="F:GTP binding"/>
    <property type="evidence" value="ECO:0007669"/>
    <property type="project" value="UniProtKB-UniRule"/>
</dbReference>
<dbReference type="GO" id="GO:0043022">
    <property type="term" value="F:ribosome binding"/>
    <property type="evidence" value="ECO:0007669"/>
    <property type="project" value="TreeGrafter"/>
</dbReference>
<dbReference type="GO" id="GO:0042254">
    <property type="term" value="P:ribosome biogenesis"/>
    <property type="evidence" value="ECO:0007669"/>
    <property type="project" value="UniProtKB-KW"/>
</dbReference>
<dbReference type="CDD" id="cd01894">
    <property type="entry name" value="EngA1"/>
    <property type="match status" value="1"/>
</dbReference>
<dbReference type="CDD" id="cd01895">
    <property type="entry name" value="EngA2"/>
    <property type="match status" value="1"/>
</dbReference>
<dbReference type="FunFam" id="3.30.300.20:FF:000004">
    <property type="entry name" value="GTPase Der"/>
    <property type="match status" value="1"/>
</dbReference>
<dbReference type="FunFam" id="3.40.50.300:FF:000040">
    <property type="entry name" value="GTPase Der"/>
    <property type="match status" value="1"/>
</dbReference>
<dbReference type="FunFam" id="3.40.50.300:FF:000057">
    <property type="entry name" value="GTPase Der"/>
    <property type="match status" value="1"/>
</dbReference>
<dbReference type="Gene3D" id="3.30.300.20">
    <property type="match status" value="1"/>
</dbReference>
<dbReference type="Gene3D" id="3.40.50.300">
    <property type="entry name" value="P-loop containing nucleotide triphosphate hydrolases"/>
    <property type="match status" value="2"/>
</dbReference>
<dbReference type="HAMAP" id="MF_00195">
    <property type="entry name" value="GTPase_Der"/>
    <property type="match status" value="1"/>
</dbReference>
<dbReference type="InterPro" id="IPR031166">
    <property type="entry name" value="G_ENGA"/>
</dbReference>
<dbReference type="InterPro" id="IPR006073">
    <property type="entry name" value="GTP-bd"/>
</dbReference>
<dbReference type="InterPro" id="IPR016484">
    <property type="entry name" value="GTPase_Der"/>
</dbReference>
<dbReference type="InterPro" id="IPR032859">
    <property type="entry name" value="KH_dom-like"/>
</dbReference>
<dbReference type="InterPro" id="IPR015946">
    <property type="entry name" value="KH_dom-like_a/b"/>
</dbReference>
<dbReference type="InterPro" id="IPR027417">
    <property type="entry name" value="P-loop_NTPase"/>
</dbReference>
<dbReference type="InterPro" id="IPR005225">
    <property type="entry name" value="Small_GTP-bd"/>
</dbReference>
<dbReference type="NCBIfam" id="TIGR03594">
    <property type="entry name" value="GTPase_EngA"/>
    <property type="match status" value="1"/>
</dbReference>
<dbReference type="NCBIfam" id="TIGR00231">
    <property type="entry name" value="small_GTP"/>
    <property type="match status" value="2"/>
</dbReference>
<dbReference type="PANTHER" id="PTHR43834">
    <property type="entry name" value="GTPASE DER"/>
    <property type="match status" value="1"/>
</dbReference>
<dbReference type="PANTHER" id="PTHR43834:SF6">
    <property type="entry name" value="GTPASE DER"/>
    <property type="match status" value="1"/>
</dbReference>
<dbReference type="Pfam" id="PF14714">
    <property type="entry name" value="KH_dom-like"/>
    <property type="match status" value="1"/>
</dbReference>
<dbReference type="Pfam" id="PF01926">
    <property type="entry name" value="MMR_HSR1"/>
    <property type="match status" value="2"/>
</dbReference>
<dbReference type="PIRSF" id="PIRSF006485">
    <property type="entry name" value="GTP-binding_EngA"/>
    <property type="match status" value="1"/>
</dbReference>
<dbReference type="PRINTS" id="PR00326">
    <property type="entry name" value="GTP1OBG"/>
</dbReference>
<dbReference type="SUPFAM" id="SSF52540">
    <property type="entry name" value="P-loop containing nucleoside triphosphate hydrolases"/>
    <property type="match status" value="2"/>
</dbReference>
<dbReference type="PROSITE" id="PS51712">
    <property type="entry name" value="G_ENGA"/>
    <property type="match status" value="2"/>
</dbReference>
<keyword id="KW-0342">GTP-binding</keyword>
<keyword id="KW-0547">Nucleotide-binding</keyword>
<keyword id="KW-0677">Repeat</keyword>
<keyword id="KW-0690">Ribosome biogenesis</keyword>
<gene>
    <name evidence="1" type="primary">der</name>
    <name type="synonym">engA</name>
    <name type="ordered locus">ASA_2595</name>
</gene>
<evidence type="ECO:0000255" key="1">
    <source>
        <dbReference type="HAMAP-Rule" id="MF_00195"/>
    </source>
</evidence>
<evidence type="ECO:0000256" key="2">
    <source>
        <dbReference type="SAM" id="MobiDB-lite"/>
    </source>
</evidence>